<evidence type="ECO:0000255" key="1">
    <source>
        <dbReference type="PROSITE-ProRule" id="PRU00441"/>
    </source>
</evidence>
<evidence type="ECO:0000305" key="2"/>
<comment type="function">
    <text>Probably part of a binding-protein-dependent transport system. Probably responsible for the translocation of the substrate across the membrane.</text>
</comment>
<comment type="subcellular location">
    <subcellularLocation>
        <location evidence="2">Cell membrane</location>
        <topology evidence="1">Multi-pass membrane protein</topology>
    </subcellularLocation>
</comment>
<comment type="similarity">
    <text evidence="2">Belongs to the binding-protein-dependent transport system permease family. MalFG subfamily.</text>
</comment>
<proteinExistence type="inferred from homology"/>
<accession>P75262</accession>
<feature type="chain" id="PRO_0000060288" description="Probable ABC transporter permease protein MG189 homolog">
    <location>
        <begin position="1"/>
        <end position="319"/>
    </location>
</feature>
<feature type="transmembrane region" description="Helical" evidence="1">
    <location>
        <begin position="41"/>
        <end position="61"/>
    </location>
</feature>
<feature type="transmembrane region" description="Helical" evidence="1">
    <location>
        <begin position="98"/>
        <end position="118"/>
    </location>
</feature>
<feature type="transmembrane region" description="Helical" evidence="1">
    <location>
        <begin position="134"/>
        <end position="154"/>
    </location>
</feature>
<feature type="transmembrane region" description="Helical" evidence="1">
    <location>
        <begin position="169"/>
        <end position="189"/>
    </location>
</feature>
<feature type="transmembrane region" description="Helical" evidence="1">
    <location>
        <begin position="229"/>
        <end position="249"/>
    </location>
</feature>
<feature type="transmembrane region" description="Helical" evidence="1">
    <location>
        <begin position="282"/>
        <end position="302"/>
    </location>
</feature>
<feature type="domain" description="ABC transmembrane type-1" evidence="1">
    <location>
        <begin position="99"/>
        <end position="302"/>
    </location>
</feature>
<sequence length="319" mass="36677">MFKQSLIWYNRYVQKRKKGLDLTIKDRSWSNVLLGLIFKTVVLCFFGLMVIFPFYLMLVVALTSDEVVLNIREPILKSDGWHFENFRRVLEDGKYLNAIWINSLVTILSIILRLFFTVSMGYAFSLKKWKLKKLFWFIFLAVLILPESALLIGQYRVVVVANWNQPEKPAIILGLTMPFVASVFSGFMFRTAFEAIPPRIKESAFVDGCTGLRYFLKIAFPMVRSTTWTVSILTAFAAWNSYLWPLLLLTNRPDLNINLWVLAQGTDGNAGQSDEQIRVLLNLKMAAAILAILPMFIVYFLFRKRIMKAVGSRANTIKG</sequence>
<reference key="1">
    <citation type="journal article" date="1996" name="Nucleic Acids Res.">
        <title>Complete sequence analysis of the genome of the bacterium Mycoplasma pneumoniae.</title>
        <authorList>
            <person name="Himmelreich R."/>
            <person name="Hilbert H."/>
            <person name="Plagens H."/>
            <person name="Pirkl E."/>
            <person name="Li B.-C."/>
            <person name="Herrmann R."/>
        </authorList>
    </citation>
    <scope>NUCLEOTIDE SEQUENCE [LARGE SCALE GENOMIC DNA]</scope>
    <source>
        <strain>ATCC 29342 / M129 / Subtype 1</strain>
    </source>
</reference>
<dbReference type="EMBL" id="U00089">
    <property type="protein sequence ID" value="AAB95666.1"/>
    <property type="molecule type" value="Genomic_DNA"/>
</dbReference>
<dbReference type="PIR" id="S73344">
    <property type="entry name" value="S73344"/>
</dbReference>
<dbReference type="RefSeq" id="NP_109824.1">
    <property type="nucleotide sequence ID" value="NC_000912.1"/>
</dbReference>
<dbReference type="RefSeq" id="WP_010874493.1">
    <property type="nucleotide sequence ID" value="NZ_OU342337.1"/>
</dbReference>
<dbReference type="SMR" id="P75262"/>
<dbReference type="STRING" id="272634.MPN_136"/>
<dbReference type="EnsemblBacteria" id="AAB95666">
    <property type="protein sequence ID" value="AAB95666"/>
    <property type="gene ID" value="MPN_136"/>
</dbReference>
<dbReference type="KEGG" id="mpn:MPN_136"/>
<dbReference type="PATRIC" id="fig|272634.6.peg.150"/>
<dbReference type="HOGENOM" id="CLU_016047_1_1_14"/>
<dbReference type="OrthoDB" id="9787837at2"/>
<dbReference type="BioCyc" id="MPNE272634:G1GJ3-230-MONOMER"/>
<dbReference type="Proteomes" id="UP000000808">
    <property type="component" value="Chromosome"/>
</dbReference>
<dbReference type="GO" id="GO:0005886">
    <property type="term" value="C:plasma membrane"/>
    <property type="evidence" value="ECO:0007669"/>
    <property type="project" value="UniProtKB-SubCell"/>
</dbReference>
<dbReference type="GO" id="GO:0055085">
    <property type="term" value="P:transmembrane transport"/>
    <property type="evidence" value="ECO:0007669"/>
    <property type="project" value="InterPro"/>
</dbReference>
<dbReference type="CDD" id="cd06261">
    <property type="entry name" value="TM_PBP2"/>
    <property type="match status" value="1"/>
</dbReference>
<dbReference type="Gene3D" id="1.10.3720.10">
    <property type="entry name" value="MetI-like"/>
    <property type="match status" value="1"/>
</dbReference>
<dbReference type="InterPro" id="IPR000515">
    <property type="entry name" value="MetI-like"/>
</dbReference>
<dbReference type="InterPro" id="IPR035906">
    <property type="entry name" value="MetI-like_sf"/>
</dbReference>
<dbReference type="PANTHER" id="PTHR43744:SF12">
    <property type="entry name" value="ABC TRANSPORTER PERMEASE PROTEIN MG189-RELATED"/>
    <property type="match status" value="1"/>
</dbReference>
<dbReference type="PANTHER" id="PTHR43744">
    <property type="entry name" value="ABC TRANSPORTER PERMEASE PROTEIN MG189-RELATED-RELATED"/>
    <property type="match status" value="1"/>
</dbReference>
<dbReference type="Pfam" id="PF00528">
    <property type="entry name" value="BPD_transp_1"/>
    <property type="match status" value="1"/>
</dbReference>
<dbReference type="SUPFAM" id="SSF161098">
    <property type="entry name" value="MetI-like"/>
    <property type="match status" value="1"/>
</dbReference>
<dbReference type="PROSITE" id="PS50928">
    <property type="entry name" value="ABC_TM1"/>
    <property type="match status" value="1"/>
</dbReference>
<name>Y136_MYCPN</name>
<gene>
    <name type="ordered locus">MPN_136</name>
    <name type="ORF">E07_orf319</name>
    <name type="ORF">MP018</name>
</gene>
<keyword id="KW-1003">Cell membrane</keyword>
<keyword id="KW-0472">Membrane</keyword>
<keyword id="KW-1185">Reference proteome</keyword>
<keyword id="KW-0812">Transmembrane</keyword>
<keyword id="KW-1133">Transmembrane helix</keyword>
<keyword id="KW-0813">Transport</keyword>
<organism>
    <name type="scientific">Mycoplasma pneumoniae (strain ATCC 29342 / M129 / Subtype 1)</name>
    <name type="common">Mycoplasmoides pneumoniae</name>
    <dbReference type="NCBI Taxonomy" id="272634"/>
    <lineage>
        <taxon>Bacteria</taxon>
        <taxon>Bacillati</taxon>
        <taxon>Mycoplasmatota</taxon>
        <taxon>Mycoplasmoidales</taxon>
        <taxon>Mycoplasmoidaceae</taxon>
        <taxon>Mycoplasmoides</taxon>
    </lineage>
</organism>
<protein>
    <recommendedName>
        <fullName>Probable ABC transporter permease protein MG189 homolog</fullName>
    </recommendedName>
</protein>